<dbReference type="EC" id="5.1.1.3" evidence="1"/>
<dbReference type="EMBL" id="CP000939">
    <property type="protein sequence ID" value="ACA44853.1"/>
    <property type="molecule type" value="Genomic_DNA"/>
</dbReference>
<dbReference type="RefSeq" id="WP_003400955.1">
    <property type="nucleotide sequence ID" value="NC_010516.1"/>
</dbReference>
<dbReference type="SMR" id="B1IH18"/>
<dbReference type="KEGG" id="cbb:CLD_0921"/>
<dbReference type="HOGENOM" id="CLU_052344_1_0_9"/>
<dbReference type="UniPathway" id="UPA00219"/>
<dbReference type="Proteomes" id="UP000008541">
    <property type="component" value="Chromosome"/>
</dbReference>
<dbReference type="GO" id="GO:0008881">
    <property type="term" value="F:glutamate racemase activity"/>
    <property type="evidence" value="ECO:0007669"/>
    <property type="project" value="UniProtKB-UniRule"/>
</dbReference>
<dbReference type="GO" id="GO:0071555">
    <property type="term" value="P:cell wall organization"/>
    <property type="evidence" value="ECO:0007669"/>
    <property type="project" value="UniProtKB-KW"/>
</dbReference>
<dbReference type="GO" id="GO:0009252">
    <property type="term" value="P:peptidoglycan biosynthetic process"/>
    <property type="evidence" value="ECO:0007669"/>
    <property type="project" value="UniProtKB-UniRule"/>
</dbReference>
<dbReference type="GO" id="GO:0008360">
    <property type="term" value="P:regulation of cell shape"/>
    <property type="evidence" value="ECO:0007669"/>
    <property type="project" value="UniProtKB-KW"/>
</dbReference>
<dbReference type="FunFam" id="3.40.50.1860:FF:000002">
    <property type="entry name" value="Glutamate racemase"/>
    <property type="match status" value="1"/>
</dbReference>
<dbReference type="Gene3D" id="3.40.50.1860">
    <property type="match status" value="2"/>
</dbReference>
<dbReference type="HAMAP" id="MF_00258">
    <property type="entry name" value="Glu_racemase"/>
    <property type="match status" value="1"/>
</dbReference>
<dbReference type="InterPro" id="IPR015942">
    <property type="entry name" value="Asp/Glu/hydantoin_racemase"/>
</dbReference>
<dbReference type="InterPro" id="IPR001920">
    <property type="entry name" value="Asp/Glu_race"/>
</dbReference>
<dbReference type="InterPro" id="IPR018187">
    <property type="entry name" value="Asp/Glu_racemase_AS_1"/>
</dbReference>
<dbReference type="InterPro" id="IPR033134">
    <property type="entry name" value="Asp/Glu_racemase_AS_2"/>
</dbReference>
<dbReference type="InterPro" id="IPR004391">
    <property type="entry name" value="Glu_race"/>
</dbReference>
<dbReference type="NCBIfam" id="TIGR00067">
    <property type="entry name" value="glut_race"/>
    <property type="match status" value="1"/>
</dbReference>
<dbReference type="PANTHER" id="PTHR21198">
    <property type="entry name" value="GLUTAMATE RACEMASE"/>
    <property type="match status" value="1"/>
</dbReference>
<dbReference type="PANTHER" id="PTHR21198:SF3">
    <property type="entry name" value="GLUTAMATE RACEMASE"/>
    <property type="match status" value="1"/>
</dbReference>
<dbReference type="Pfam" id="PF01177">
    <property type="entry name" value="Asp_Glu_race"/>
    <property type="match status" value="1"/>
</dbReference>
<dbReference type="SUPFAM" id="SSF53681">
    <property type="entry name" value="Aspartate/glutamate racemase"/>
    <property type="match status" value="2"/>
</dbReference>
<dbReference type="PROSITE" id="PS00923">
    <property type="entry name" value="ASP_GLU_RACEMASE_1"/>
    <property type="match status" value="1"/>
</dbReference>
<dbReference type="PROSITE" id="PS00924">
    <property type="entry name" value="ASP_GLU_RACEMASE_2"/>
    <property type="match status" value="1"/>
</dbReference>
<evidence type="ECO:0000255" key="1">
    <source>
        <dbReference type="HAMAP-Rule" id="MF_00258"/>
    </source>
</evidence>
<feature type="chain" id="PRO_1000114038" description="Glutamate racemase">
    <location>
        <begin position="1"/>
        <end position="257"/>
    </location>
</feature>
<feature type="active site" description="Proton donor/acceptor" evidence="1">
    <location>
        <position position="75"/>
    </location>
</feature>
<feature type="active site" description="Proton donor/acceptor" evidence="1">
    <location>
        <position position="185"/>
    </location>
</feature>
<feature type="binding site" evidence="1">
    <location>
        <begin position="12"/>
        <end position="13"/>
    </location>
    <ligand>
        <name>substrate</name>
    </ligand>
</feature>
<feature type="binding site" evidence="1">
    <location>
        <begin position="44"/>
        <end position="45"/>
    </location>
    <ligand>
        <name>substrate</name>
    </ligand>
</feature>
<feature type="binding site" evidence="1">
    <location>
        <begin position="76"/>
        <end position="77"/>
    </location>
    <ligand>
        <name>substrate</name>
    </ligand>
</feature>
<feature type="binding site" evidence="1">
    <location>
        <begin position="186"/>
        <end position="187"/>
    </location>
    <ligand>
        <name>substrate</name>
    </ligand>
</feature>
<name>MURI_CLOBK</name>
<gene>
    <name evidence="1" type="primary">murI</name>
    <name type="ordered locus">CLD_0921</name>
</gene>
<proteinExistence type="inferred from homology"/>
<sequence length="257" mass="28848">MSINDKPIGFFDSGVGGISVLKEAFKLLPKEDFLYYGDSKNAPYGTKKVEEVKALTFNATDFLMNKGIKALVVACNTATSVTINDLRENYDIPIIGIEPALKPAVELKKGGKIIIMATPMTLAEKKFANLMDLYKETEDIEPLPCPGLPELIEQGIVSGDVIYNYLKDKFSKYDNEKISSIVLGCTHYPFIEKTLKEVTYNKACIIDGSFGTSRELKRQLKNSNMLREENRVGKVTIFNSREDKDIIDLSYKLFNMK</sequence>
<keyword id="KW-0133">Cell shape</keyword>
<keyword id="KW-0961">Cell wall biogenesis/degradation</keyword>
<keyword id="KW-0413">Isomerase</keyword>
<keyword id="KW-0573">Peptidoglycan synthesis</keyword>
<comment type="function">
    <text evidence="1">Provides the (R)-glutamate required for cell wall biosynthesis.</text>
</comment>
<comment type="catalytic activity">
    <reaction evidence="1">
        <text>L-glutamate = D-glutamate</text>
        <dbReference type="Rhea" id="RHEA:12813"/>
        <dbReference type="ChEBI" id="CHEBI:29985"/>
        <dbReference type="ChEBI" id="CHEBI:29986"/>
        <dbReference type="EC" id="5.1.1.3"/>
    </reaction>
</comment>
<comment type="pathway">
    <text evidence="1">Cell wall biogenesis; peptidoglycan biosynthesis.</text>
</comment>
<comment type="similarity">
    <text evidence="1">Belongs to the aspartate/glutamate racemases family.</text>
</comment>
<accession>B1IH18</accession>
<organism>
    <name type="scientific">Clostridium botulinum (strain Okra / Type B1)</name>
    <dbReference type="NCBI Taxonomy" id="498213"/>
    <lineage>
        <taxon>Bacteria</taxon>
        <taxon>Bacillati</taxon>
        <taxon>Bacillota</taxon>
        <taxon>Clostridia</taxon>
        <taxon>Eubacteriales</taxon>
        <taxon>Clostridiaceae</taxon>
        <taxon>Clostridium</taxon>
    </lineage>
</organism>
<protein>
    <recommendedName>
        <fullName evidence="1">Glutamate racemase</fullName>
        <ecNumber evidence="1">5.1.1.3</ecNumber>
    </recommendedName>
</protein>
<reference key="1">
    <citation type="journal article" date="2007" name="PLoS ONE">
        <title>Analysis of the neurotoxin complex genes in Clostridium botulinum A1-A4 and B1 strains: BoNT/A3, /Ba4 and /B1 clusters are located within plasmids.</title>
        <authorList>
            <person name="Smith T.J."/>
            <person name="Hill K.K."/>
            <person name="Foley B.T."/>
            <person name="Detter J.C."/>
            <person name="Munk A.C."/>
            <person name="Bruce D.C."/>
            <person name="Doggett N.A."/>
            <person name="Smith L.A."/>
            <person name="Marks J.D."/>
            <person name="Xie G."/>
            <person name="Brettin T.S."/>
        </authorList>
    </citation>
    <scope>NUCLEOTIDE SEQUENCE [LARGE SCALE GENOMIC DNA]</scope>
    <source>
        <strain>Okra / Type B1</strain>
    </source>
</reference>